<accession>Q9HV46</accession>
<protein>
    <recommendedName>
        <fullName evidence="1">Transcription elongation factor GreA</fullName>
    </recommendedName>
    <alternativeName>
        <fullName evidence="1">Transcript cleavage factor GreA</fullName>
    </alternativeName>
</protein>
<organism>
    <name type="scientific">Pseudomonas aeruginosa (strain ATCC 15692 / DSM 22644 / CIP 104116 / JCM 14847 / LMG 12228 / 1C / PRS 101 / PAO1)</name>
    <dbReference type="NCBI Taxonomy" id="208964"/>
    <lineage>
        <taxon>Bacteria</taxon>
        <taxon>Pseudomonadati</taxon>
        <taxon>Pseudomonadota</taxon>
        <taxon>Gammaproteobacteria</taxon>
        <taxon>Pseudomonadales</taxon>
        <taxon>Pseudomonadaceae</taxon>
        <taxon>Pseudomonas</taxon>
    </lineage>
</organism>
<name>GREA_PSEAE</name>
<dbReference type="EMBL" id="AE004091">
    <property type="protein sequence ID" value="AAG08141.1"/>
    <property type="molecule type" value="Genomic_DNA"/>
</dbReference>
<dbReference type="PIR" id="D83051">
    <property type="entry name" value="D83051"/>
</dbReference>
<dbReference type="RefSeq" id="NP_253443.1">
    <property type="nucleotide sequence ID" value="NC_002516.2"/>
</dbReference>
<dbReference type="RefSeq" id="WP_003095206.1">
    <property type="nucleotide sequence ID" value="NZ_QZGE01000018.1"/>
</dbReference>
<dbReference type="SMR" id="Q9HV46"/>
<dbReference type="FunCoup" id="Q9HV46">
    <property type="interactions" value="602"/>
</dbReference>
<dbReference type="STRING" id="208964.PA4755"/>
<dbReference type="PaxDb" id="208964-PA4755"/>
<dbReference type="DNASU" id="881736"/>
<dbReference type="GeneID" id="77223292"/>
<dbReference type="GeneID" id="881736"/>
<dbReference type="KEGG" id="pae:PA4755"/>
<dbReference type="PATRIC" id="fig|208964.12.peg.4981"/>
<dbReference type="PseudoCAP" id="PA4755"/>
<dbReference type="HOGENOM" id="CLU_101379_2_0_6"/>
<dbReference type="InParanoid" id="Q9HV46"/>
<dbReference type="OrthoDB" id="9808774at2"/>
<dbReference type="PhylomeDB" id="Q9HV46"/>
<dbReference type="BioCyc" id="PAER208964:G1FZ6-4867-MONOMER"/>
<dbReference type="Proteomes" id="UP000002438">
    <property type="component" value="Chromosome"/>
</dbReference>
<dbReference type="GO" id="GO:0003677">
    <property type="term" value="F:DNA binding"/>
    <property type="evidence" value="ECO:0007669"/>
    <property type="project" value="UniProtKB-UniRule"/>
</dbReference>
<dbReference type="GO" id="GO:0070063">
    <property type="term" value="F:RNA polymerase binding"/>
    <property type="evidence" value="ECO:0007669"/>
    <property type="project" value="InterPro"/>
</dbReference>
<dbReference type="GO" id="GO:0006354">
    <property type="term" value="P:DNA-templated transcription elongation"/>
    <property type="evidence" value="ECO:0000318"/>
    <property type="project" value="GO_Central"/>
</dbReference>
<dbReference type="GO" id="GO:0032784">
    <property type="term" value="P:regulation of DNA-templated transcription elongation"/>
    <property type="evidence" value="ECO:0007669"/>
    <property type="project" value="UniProtKB-UniRule"/>
</dbReference>
<dbReference type="FunFam" id="1.10.287.180:FF:000001">
    <property type="entry name" value="Transcription elongation factor GreA"/>
    <property type="match status" value="1"/>
</dbReference>
<dbReference type="FunFam" id="3.10.50.30:FF:000001">
    <property type="entry name" value="Transcription elongation factor GreA"/>
    <property type="match status" value="1"/>
</dbReference>
<dbReference type="Gene3D" id="3.10.50.30">
    <property type="entry name" value="Transcription elongation factor, GreA/GreB, C-terminal domain"/>
    <property type="match status" value="1"/>
</dbReference>
<dbReference type="Gene3D" id="1.10.287.180">
    <property type="entry name" value="Transcription elongation factor, GreA/GreB, N-terminal domain"/>
    <property type="match status" value="1"/>
</dbReference>
<dbReference type="HAMAP" id="MF_00105">
    <property type="entry name" value="GreA_GreB"/>
    <property type="match status" value="1"/>
</dbReference>
<dbReference type="InterPro" id="IPR036953">
    <property type="entry name" value="GreA/GreB_C_sf"/>
</dbReference>
<dbReference type="InterPro" id="IPR018151">
    <property type="entry name" value="TF_GreA/GreB_CS"/>
</dbReference>
<dbReference type="InterPro" id="IPR006359">
    <property type="entry name" value="Tscrpt_elong_fac_GreA"/>
</dbReference>
<dbReference type="InterPro" id="IPR028624">
    <property type="entry name" value="Tscrpt_elong_fac_GreA/B"/>
</dbReference>
<dbReference type="InterPro" id="IPR001437">
    <property type="entry name" value="Tscrpt_elong_fac_GreA/B_C"/>
</dbReference>
<dbReference type="InterPro" id="IPR023459">
    <property type="entry name" value="Tscrpt_elong_fac_GreA/B_fam"/>
</dbReference>
<dbReference type="InterPro" id="IPR022691">
    <property type="entry name" value="Tscrpt_elong_fac_GreA/B_N"/>
</dbReference>
<dbReference type="InterPro" id="IPR036805">
    <property type="entry name" value="Tscrpt_elong_fac_GreA/B_N_sf"/>
</dbReference>
<dbReference type="NCBIfam" id="TIGR01462">
    <property type="entry name" value="greA"/>
    <property type="match status" value="1"/>
</dbReference>
<dbReference type="NCBIfam" id="NF001261">
    <property type="entry name" value="PRK00226.1-2"/>
    <property type="match status" value="1"/>
</dbReference>
<dbReference type="NCBIfam" id="NF001263">
    <property type="entry name" value="PRK00226.1-4"/>
    <property type="match status" value="1"/>
</dbReference>
<dbReference type="NCBIfam" id="NF001264">
    <property type="entry name" value="PRK00226.1-5"/>
    <property type="match status" value="1"/>
</dbReference>
<dbReference type="PANTHER" id="PTHR30437">
    <property type="entry name" value="TRANSCRIPTION ELONGATION FACTOR GREA"/>
    <property type="match status" value="1"/>
</dbReference>
<dbReference type="PANTHER" id="PTHR30437:SF4">
    <property type="entry name" value="TRANSCRIPTION ELONGATION FACTOR GREA"/>
    <property type="match status" value="1"/>
</dbReference>
<dbReference type="Pfam" id="PF01272">
    <property type="entry name" value="GreA_GreB"/>
    <property type="match status" value="1"/>
</dbReference>
<dbReference type="Pfam" id="PF03449">
    <property type="entry name" value="GreA_GreB_N"/>
    <property type="match status" value="1"/>
</dbReference>
<dbReference type="PIRSF" id="PIRSF006092">
    <property type="entry name" value="GreA_GreB"/>
    <property type="match status" value="1"/>
</dbReference>
<dbReference type="SUPFAM" id="SSF54534">
    <property type="entry name" value="FKBP-like"/>
    <property type="match status" value="1"/>
</dbReference>
<dbReference type="SUPFAM" id="SSF46557">
    <property type="entry name" value="GreA transcript cleavage protein, N-terminal domain"/>
    <property type="match status" value="1"/>
</dbReference>
<dbReference type="PROSITE" id="PS00829">
    <property type="entry name" value="GREAB_1"/>
    <property type="match status" value="1"/>
</dbReference>
<dbReference type="PROSITE" id="PS00830">
    <property type="entry name" value="GREAB_2"/>
    <property type="match status" value="1"/>
</dbReference>
<comment type="function">
    <text evidence="1">Necessary for efficient RNA polymerase transcription elongation past template-encoded arresting sites. The arresting sites in DNA have the property of trapping a certain fraction of elongating RNA polymerases that pass through, resulting in locked ternary complexes. Cleavage of the nascent transcript by cleavage factors such as GreA or GreB allows the resumption of elongation from the new 3'terminus. GreA releases sequences of 2 to 3 nucleotides.</text>
</comment>
<comment type="similarity">
    <text evidence="1">Belongs to the GreA/GreB family.</text>
</comment>
<gene>
    <name evidence="1" type="primary">greA</name>
    <name type="ordered locus">PA4755</name>
</gene>
<feature type="chain" id="PRO_0000176952" description="Transcription elongation factor GreA">
    <location>
        <begin position="1"/>
        <end position="158"/>
    </location>
</feature>
<feature type="coiled-coil region" evidence="1">
    <location>
        <begin position="53"/>
        <end position="73"/>
    </location>
</feature>
<keyword id="KW-0175">Coiled coil</keyword>
<keyword id="KW-0238">DNA-binding</keyword>
<keyword id="KW-1185">Reference proteome</keyword>
<keyword id="KW-0804">Transcription</keyword>
<keyword id="KW-0805">Transcription regulation</keyword>
<sequence>MSKFPMTVQGARALEEEVKHLKGVLRPQISQAIAEARELGDLKENAEYHAAREQQGMVEARIRDIEAKLSNAQVIDVTAIPHSGKVIFGTTVDIANVETDETVTYQIVGDDEADIKGGKISVNSPIARALIGKTEGDAVLVRTPGGDVEYEIVEVRHI</sequence>
<reference key="1">
    <citation type="journal article" date="2000" name="Nature">
        <title>Complete genome sequence of Pseudomonas aeruginosa PAO1, an opportunistic pathogen.</title>
        <authorList>
            <person name="Stover C.K."/>
            <person name="Pham X.-Q.T."/>
            <person name="Erwin A.L."/>
            <person name="Mizoguchi S.D."/>
            <person name="Warrener P."/>
            <person name="Hickey M.J."/>
            <person name="Brinkman F.S.L."/>
            <person name="Hufnagle W.O."/>
            <person name="Kowalik D.J."/>
            <person name="Lagrou M."/>
            <person name="Garber R.L."/>
            <person name="Goltry L."/>
            <person name="Tolentino E."/>
            <person name="Westbrock-Wadman S."/>
            <person name="Yuan Y."/>
            <person name="Brody L.L."/>
            <person name="Coulter S.N."/>
            <person name="Folger K.R."/>
            <person name="Kas A."/>
            <person name="Larbig K."/>
            <person name="Lim R.M."/>
            <person name="Smith K.A."/>
            <person name="Spencer D.H."/>
            <person name="Wong G.K.-S."/>
            <person name="Wu Z."/>
            <person name="Paulsen I.T."/>
            <person name="Reizer J."/>
            <person name="Saier M.H. Jr."/>
            <person name="Hancock R.E.W."/>
            <person name="Lory S."/>
            <person name="Olson M.V."/>
        </authorList>
    </citation>
    <scope>NUCLEOTIDE SEQUENCE [LARGE SCALE GENOMIC DNA]</scope>
    <source>
        <strain>ATCC 15692 / DSM 22644 / CIP 104116 / JCM 14847 / LMG 12228 / 1C / PRS 101 / PAO1</strain>
    </source>
</reference>
<evidence type="ECO:0000255" key="1">
    <source>
        <dbReference type="HAMAP-Rule" id="MF_00105"/>
    </source>
</evidence>
<proteinExistence type="inferred from homology"/>